<accession>P59456</accession>
<reference key="1">
    <citation type="journal article" date="2003" name="Proc. Natl. Acad. Sci. U.S.A.">
        <title>Reductive genome evolution in Buchnera aphidicola.</title>
        <authorList>
            <person name="van Ham R.C.H.J."/>
            <person name="Kamerbeek J."/>
            <person name="Palacios C."/>
            <person name="Rausell C."/>
            <person name="Abascal F."/>
            <person name="Bastolla U."/>
            <person name="Fernandez J.M."/>
            <person name="Jimenez L."/>
            <person name="Postigo M."/>
            <person name="Silva F.J."/>
            <person name="Tamames J."/>
            <person name="Viguera E."/>
            <person name="Latorre A."/>
            <person name="Valencia A."/>
            <person name="Moran F."/>
            <person name="Moya A."/>
        </authorList>
    </citation>
    <scope>NUCLEOTIDE SEQUENCE [LARGE SCALE GENOMIC DNA]</scope>
    <source>
        <strain>Bp</strain>
    </source>
</reference>
<comment type="function">
    <text evidence="1">Peptide chain release factor 1 directs the termination of translation in response to the peptide chain termination codons UAG and UAA.</text>
</comment>
<comment type="subcellular location">
    <subcellularLocation>
        <location evidence="1">Cytoplasm</location>
    </subcellularLocation>
</comment>
<comment type="PTM">
    <text evidence="1">Methylated by PrmC. Methylation increases the termination efficiency of RF1.</text>
</comment>
<comment type="similarity">
    <text evidence="1">Belongs to the prokaryotic/mitochondrial release factor family.</text>
</comment>
<proteinExistence type="inferred from homology"/>
<dbReference type="EMBL" id="AE016826">
    <property type="protein sequence ID" value="AAO26894.1"/>
    <property type="molecule type" value="Genomic_DNA"/>
</dbReference>
<dbReference type="RefSeq" id="WP_011091295.1">
    <property type="nucleotide sequence ID" value="NC_004545.1"/>
</dbReference>
<dbReference type="SMR" id="P59456"/>
<dbReference type="STRING" id="224915.bbp_161"/>
<dbReference type="KEGG" id="bab:bbp_161"/>
<dbReference type="eggNOG" id="COG0216">
    <property type="taxonomic scope" value="Bacteria"/>
</dbReference>
<dbReference type="HOGENOM" id="CLU_036856_0_1_6"/>
<dbReference type="OrthoDB" id="9806673at2"/>
<dbReference type="Proteomes" id="UP000000601">
    <property type="component" value="Chromosome"/>
</dbReference>
<dbReference type="GO" id="GO:0005737">
    <property type="term" value="C:cytoplasm"/>
    <property type="evidence" value="ECO:0007669"/>
    <property type="project" value="UniProtKB-SubCell"/>
</dbReference>
<dbReference type="GO" id="GO:0016149">
    <property type="term" value="F:translation release factor activity, codon specific"/>
    <property type="evidence" value="ECO:0007669"/>
    <property type="project" value="UniProtKB-UniRule"/>
</dbReference>
<dbReference type="FunFam" id="3.30.160.20:FF:000004">
    <property type="entry name" value="Peptide chain release factor 1"/>
    <property type="match status" value="1"/>
</dbReference>
<dbReference type="FunFam" id="3.30.70.1660:FF:000002">
    <property type="entry name" value="Peptide chain release factor 1"/>
    <property type="match status" value="1"/>
</dbReference>
<dbReference type="Gene3D" id="3.30.160.20">
    <property type="match status" value="1"/>
</dbReference>
<dbReference type="Gene3D" id="3.30.70.1660">
    <property type="match status" value="1"/>
</dbReference>
<dbReference type="Gene3D" id="6.10.140.1950">
    <property type="match status" value="1"/>
</dbReference>
<dbReference type="HAMAP" id="MF_00093">
    <property type="entry name" value="Rel_fac_1"/>
    <property type="match status" value="1"/>
</dbReference>
<dbReference type="InterPro" id="IPR005139">
    <property type="entry name" value="PCRF"/>
</dbReference>
<dbReference type="InterPro" id="IPR000352">
    <property type="entry name" value="Pep_chain_release_fac_I"/>
</dbReference>
<dbReference type="InterPro" id="IPR045853">
    <property type="entry name" value="Pep_chain_release_fac_I_sf"/>
</dbReference>
<dbReference type="InterPro" id="IPR050057">
    <property type="entry name" value="Prokaryotic/Mito_RF"/>
</dbReference>
<dbReference type="InterPro" id="IPR004373">
    <property type="entry name" value="RF-1"/>
</dbReference>
<dbReference type="NCBIfam" id="TIGR00019">
    <property type="entry name" value="prfA"/>
    <property type="match status" value="1"/>
</dbReference>
<dbReference type="NCBIfam" id="NF001859">
    <property type="entry name" value="PRK00591.1"/>
    <property type="match status" value="1"/>
</dbReference>
<dbReference type="PANTHER" id="PTHR43804">
    <property type="entry name" value="LD18447P"/>
    <property type="match status" value="1"/>
</dbReference>
<dbReference type="PANTHER" id="PTHR43804:SF7">
    <property type="entry name" value="LD18447P"/>
    <property type="match status" value="1"/>
</dbReference>
<dbReference type="Pfam" id="PF03462">
    <property type="entry name" value="PCRF"/>
    <property type="match status" value="1"/>
</dbReference>
<dbReference type="Pfam" id="PF00472">
    <property type="entry name" value="RF-1"/>
    <property type="match status" value="1"/>
</dbReference>
<dbReference type="SMART" id="SM00937">
    <property type="entry name" value="PCRF"/>
    <property type="match status" value="1"/>
</dbReference>
<dbReference type="SUPFAM" id="SSF75620">
    <property type="entry name" value="Release factor"/>
    <property type="match status" value="1"/>
</dbReference>
<dbReference type="PROSITE" id="PS00745">
    <property type="entry name" value="RF_PROK_I"/>
    <property type="match status" value="1"/>
</dbReference>
<keyword id="KW-0963">Cytoplasm</keyword>
<keyword id="KW-0488">Methylation</keyword>
<keyword id="KW-0648">Protein biosynthesis</keyword>
<keyword id="KW-1185">Reference proteome</keyword>
<protein>
    <recommendedName>
        <fullName evidence="1">Peptide chain release factor 1</fullName>
        <shortName evidence="1">RF-1</shortName>
    </recommendedName>
</protein>
<evidence type="ECO:0000255" key="1">
    <source>
        <dbReference type="HAMAP-Rule" id="MF_00093"/>
    </source>
</evidence>
<organism>
    <name type="scientific">Buchnera aphidicola subsp. Baizongia pistaciae (strain Bp)</name>
    <dbReference type="NCBI Taxonomy" id="224915"/>
    <lineage>
        <taxon>Bacteria</taxon>
        <taxon>Pseudomonadati</taxon>
        <taxon>Pseudomonadota</taxon>
        <taxon>Gammaproteobacteria</taxon>
        <taxon>Enterobacterales</taxon>
        <taxon>Erwiniaceae</taxon>
        <taxon>Buchnera</taxon>
    </lineage>
</organism>
<gene>
    <name evidence="1" type="primary">prfA</name>
    <name type="ordered locus">bbp_161</name>
</gene>
<sequence>MKSSMMKKLESLHRRYEEIESMLSDRTVISNQEKFRELSQEYLKLSDINYCFVQWKNCNHDVIETKLLLLDSELHDVAEQELQMLSKKMKKIETEIQVLLLPCDPNDQQNCFLEIRSASGGDEAAIFSGDLFRMYIKYSEFQNWKTNIIHMTHSLKGGYKDIIVKITGKGSYGKLKFESGGHRVQRVPKTESQGRVHTSTCIVAVIPVVPKKEIEKVNINDLKIDTFRSSGAGGQHVNTTDSAVRITHIPSGQVVECQDERSQHKNKAKALSVLVSRIKAAELYNQRKKNAIQRRDLLGTGMRSDRNRTYNFAQNRVTDHRINLVVYCLDEVLDGKLDVLIEPIIQEHNADVLSNLSNIEFL</sequence>
<name>RF1_BUCBP</name>
<feature type="chain" id="PRO_0000177648" description="Peptide chain release factor 1">
    <location>
        <begin position="1"/>
        <end position="362"/>
    </location>
</feature>
<feature type="modified residue" description="N5-methylglutamine" evidence="1">
    <location>
        <position position="235"/>
    </location>
</feature>